<comment type="subcellular location">
    <subcellularLocation>
        <location evidence="3">Secreted</location>
    </subcellularLocation>
</comment>
<comment type="tissue specificity">
    <text evidence="3">Component of the acid-insoluble organic matrix of calcified shell layers (at protein level).</text>
</comment>
<comment type="sequence caution" evidence="4">
    <conflict type="frameshift">
        <sequence resource="EMBL" id="EZ420863"/>
    </conflict>
    <text>Based on peptide sequences from Ref.2, EST GT274178 provides the correct frame.</text>
</comment>
<comment type="sequence caution" evidence="4">
    <conflict type="frameshift">
        <sequence resource="EMBL" id="GT275233"/>
    </conflict>
    <text>Based on peptide sequences from Ref.2, EST GT274178 provides the correct frame.</text>
</comment>
<sequence>MWYKVLGIVSLCSVYVSTQGSNLQCKIAGGGELIPIRTPEYRAWVPLGEVGLNVSDSKVLIFAARSCFGAHILLQNNAEDFKNAVYEIVIGGMKNTRSGIRQCVGCKFDEWVKDKALNCRFFNYFWISWCGDEVWVGHGYRPPHNRILRYKYENQPVINAASVRSESDTYWAL</sequence>
<protein>
    <recommendedName>
        <fullName>Uncharacterized protein 5</fullName>
    </recommendedName>
</protein>
<keyword id="KW-0903">Direct protein sequencing</keyword>
<keyword id="KW-0325">Glycoprotein</keyword>
<keyword id="KW-0964">Secreted</keyword>
<keyword id="KW-0732">Signal</keyword>
<evidence type="ECO:0000255" key="1"/>
<evidence type="ECO:0000269" key="2">
    <source>
    </source>
</evidence>
<evidence type="ECO:0000269" key="3">
    <source>
    </source>
</evidence>
<evidence type="ECO:0000305" key="4"/>
<dbReference type="EMBL" id="GT273069">
    <property type="status" value="NOT_ANNOTATED_CDS"/>
    <property type="molecule type" value="mRNA"/>
</dbReference>
<dbReference type="EMBL" id="GT274178">
    <property type="status" value="NOT_ANNOTATED_CDS"/>
    <property type="molecule type" value="mRNA"/>
</dbReference>
<dbReference type="EMBL" id="GT275213">
    <property type="status" value="NOT_ANNOTATED_CDS"/>
    <property type="molecule type" value="mRNA"/>
</dbReference>
<dbReference type="EMBL" id="GT275233">
    <property type="status" value="NOT_ANNOTATED_CDS"/>
    <property type="molecule type" value="mRNA"/>
</dbReference>
<dbReference type="EMBL" id="EZ420863">
    <property type="status" value="NOT_ANNOTATED_CDS"/>
    <property type="molecule type" value="mRNA"/>
</dbReference>
<dbReference type="GO" id="GO:0005576">
    <property type="term" value="C:extracellular region"/>
    <property type="evidence" value="ECO:0000314"/>
    <property type="project" value="UniProtKB"/>
</dbReference>
<dbReference type="InterPro" id="IPR022041">
    <property type="entry name" value="Methyltransf_FA"/>
</dbReference>
<dbReference type="Pfam" id="PF12248">
    <property type="entry name" value="Methyltransf_FA"/>
    <property type="match status" value="1"/>
</dbReference>
<organism>
    <name type="scientific">Haliotis asinina</name>
    <name type="common">Donkey's ear abalone</name>
    <name type="synonym">Ass's ear abalone</name>
    <dbReference type="NCBI Taxonomy" id="109174"/>
    <lineage>
        <taxon>Eukaryota</taxon>
        <taxon>Metazoa</taxon>
        <taxon>Spiralia</taxon>
        <taxon>Lophotrochozoa</taxon>
        <taxon>Mollusca</taxon>
        <taxon>Gastropoda</taxon>
        <taxon>Vetigastropoda</taxon>
        <taxon>Lepetellida</taxon>
        <taxon>Haliotoidea</taxon>
        <taxon>Haliotidae</taxon>
        <taxon>Haliotis</taxon>
    </lineage>
</organism>
<feature type="signal peptide" evidence="1">
    <location>
        <begin position="1"/>
        <end position="20"/>
    </location>
</feature>
<feature type="chain" id="PRO_0000399451" description="Uncharacterized protein 5" evidence="1">
    <location>
        <begin position="21"/>
        <end position="173"/>
    </location>
</feature>
<feature type="glycosylation site" description="N-linked (GlcNAc...) asparagine" evidence="1">
    <location>
        <position position="53"/>
    </location>
</feature>
<feature type="sequence conflict" description="In Ref. 1; GT275213." evidence="4" ref="1">
    <original>P</original>
    <variation>H</variation>
    <location>
        <position position="156"/>
    </location>
</feature>
<reference evidence="4" key="1">
    <citation type="journal article" date="2010" name="Mol. Biol. Evol.">
        <title>Parallel evolution of nacre building gene sets in molluscs.</title>
        <authorList>
            <person name="Jackson D.J."/>
            <person name="McDougall C."/>
            <person name="Woodcroft B."/>
            <person name="Moase P."/>
            <person name="Rose R.A."/>
            <person name="Kube M."/>
            <person name="Reinhardt R."/>
            <person name="Rokhsar D.S."/>
            <person name="Montagnani C."/>
            <person name="Joubert C."/>
            <person name="Piquemal D."/>
            <person name="Degnan B.M."/>
        </authorList>
    </citation>
    <scope>NUCLEOTIDE SEQUENCE [MRNA]</scope>
    <scope>IDENTIFICATION</scope>
    <source>
        <tissue evidence="2">Mantle</tissue>
    </source>
</reference>
<reference evidence="4" key="2">
    <citation type="journal article" date="2010" name="Proteome Sci.">
        <title>Proteomic analysis of the organic matrix of the abalone Haliotis asinina calcified shell.</title>
        <authorList>
            <person name="Marie B."/>
            <person name="Marie A."/>
            <person name="Jackson D.J."/>
            <person name="Dubost L."/>
            <person name="Degnan B.M."/>
            <person name="Milet C."/>
            <person name="Marin F."/>
        </authorList>
    </citation>
    <scope>PROTEIN SEQUENCE OF 27-37; 59-65 AND 83-94</scope>
    <scope>SUBCELLULAR LOCATION</scope>
    <scope>TISSUE SPECIFICITY</scope>
    <source>
        <tissue evidence="3">Shell</tissue>
    </source>
</reference>
<accession>P86728</accession>
<proteinExistence type="evidence at protein level"/>
<name>UP5_HALAI</name>